<feature type="chain" id="PRO_0000454216" description="Ecdysone oxidase">
    <location>
        <begin position="1"/>
        <end position="599"/>
    </location>
</feature>
<feature type="active site" description="Proton acceptor" evidence="1">
    <location>
        <position position="538"/>
    </location>
</feature>
<feature type="binding site" evidence="2">
    <location>
        <begin position="137"/>
        <end position="140"/>
    </location>
    <ligand>
        <name>FAD</name>
        <dbReference type="ChEBI" id="CHEBI:57692"/>
    </ligand>
</feature>
<feature type="binding site" evidence="2">
    <location>
        <begin position="537"/>
        <end position="538"/>
    </location>
    <ligand>
        <name>FAD</name>
        <dbReference type="ChEBI" id="CHEBI:57692"/>
    </ligand>
</feature>
<dbReference type="EC" id="1.1.3.16" evidence="3"/>
<dbReference type="EMBL" id="AY035784">
    <property type="protein sequence ID" value="AAK56551.1"/>
    <property type="molecule type" value="mRNA"/>
</dbReference>
<dbReference type="EMBL" id="AY035785">
    <property type="protein sequence ID" value="AAK56552.1"/>
    <property type="molecule type" value="Genomic_DNA"/>
</dbReference>
<dbReference type="SMR" id="Q95NZ0"/>
<dbReference type="BioCyc" id="MetaCyc:MONOMER-18162"/>
<dbReference type="BRENDA" id="1.1.3.16">
    <property type="organism ID" value="5837"/>
</dbReference>
<dbReference type="GO" id="GO:0047875">
    <property type="term" value="F:ecdysone oxidase activity"/>
    <property type="evidence" value="ECO:0007669"/>
    <property type="project" value="UniProtKB-EC"/>
</dbReference>
<dbReference type="GO" id="GO:0050660">
    <property type="term" value="F:flavin adenine dinucleotide binding"/>
    <property type="evidence" value="ECO:0007669"/>
    <property type="project" value="InterPro"/>
</dbReference>
<dbReference type="Gene3D" id="3.50.50.60">
    <property type="entry name" value="FAD/NAD(P)-binding domain"/>
    <property type="match status" value="1"/>
</dbReference>
<dbReference type="Gene3D" id="3.30.560.10">
    <property type="entry name" value="Glucose Oxidase, domain 3"/>
    <property type="match status" value="1"/>
</dbReference>
<dbReference type="InterPro" id="IPR036188">
    <property type="entry name" value="FAD/NAD-bd_sf"/>
</dbReference>
<dbReference type="InterPro" id="IPR012132">
    <property type="entry name" value="GMC_OxRdtase"/>
</dbReference>
<dbReference type="InterPro" id="IPR000172">
    <property type="entry name" value="GMC_OxRdtase_N"/>
</dbReference>
<dbReference type="InterPro" id="IPR007867">
    <property type="entry name" value="GMC_OxRtase_C"/>
</dbReference>
<dbReference type="PANTHER" id="PTHR11552:SF147">
    <property type="entry name" value="CHOLINE DEHYDROGENASE, MITOCHONDRIAL"/>
    <property type="match status" value="1"/>
</dbReference>
<dbReference type="PANTHER" id="PTHR11552">
    <property type="entry name" value="GLUCOSE-METHANOL-CHOLINE GMC OXIDOREDUCTASE"/>
    <property type="match status" value="1"/>
</dbReference>
<dbReference type="Pfam" id="PF05199">
    <property type="entry name" value="GMC_oxred_C"/>
    <property type="match status" value="1"/>
</dbReference>
<dbReference type="Pfam" id="PF00732">
    <property type="entry name" value="GMC_oxred_N"/>
    <property type="match status" value="1"/>
</dbReference>
<dbReference type="PIRSF" id="PIRSF000137">
    <property type="entry name" value="Alcohol_oxidase"/>
    <property type="match status" value="1"/>
</dbReference>
<dbReference type="SUPFAM" id="SSF54373">
    <property type="entry name" value="FAD-linked reductases, C-terminal domain"/>
    <property type="match status" value="1"/>
</dbReference>
<dbReference type="SUPFAM" id="SSF51905">
    <property type="entry name" value="FAD/NAD(P)-binding domain"/>
    <property type="match status" value="1"/>
</dbReference>
<dbReference type="PROSITE" id="PS00624">
    <property type="entry name" value="GMC_OXRED_2"/>
    <property type="match status" value="1"/>
</dbReference>
<name>EO_SPOLI</name>
<comment type="function">
    <text evidence="3">Involved in the inactivation of ecdysteroid molting hormones by converting ecdysteroids into 3-dehydroecdysteroids.</text>
</comment>
<comment type="catalytic activity">
    <reaction evidence="3">
        <text>ecdysone + O2 = 3-dehydroecdysone + H2O2</text>
        <dbReference type="Rhea" id="RHEA:11796"/>
        <dbReference type="ChEBI" id="CHEBI:15379"/>
        <dbReference type="ChEBI" id="CHEBI:16240"/>
        <dbReference type="ChEBI" id="CHEBI:16688"/>
        <dbReference type="ChEBI" id="CHEBI:17058"/>
        <dbReference type="EC" id="1.1.3.16"/>
    </reaction>
    <physiologicalReaction direction="left-to-right" evidence="6">
        <dbReference type="Rhea" id="RHEA:11797"/>
    </physiologicalReaction>
</comment>
<comment type="cofactor">
    <cofactor evidence="2">
        <name>FAD</name>
        <dbReference type="ChEBI" id="CHEBI:57692"/>
    </cofactor>
</comment>
<comment type="biophysicochemical properties">
    <kinetics>
        <KM evidence="3">5.1 uM for ecdysone (at pH 6.6 and 40 degrees Celsius)</KM>
        <Vmax evidence="3">0.036 nmol/min/ug enzyme (at pH 6.6 and 40 degrees Celsius)</Vmax>
    </kinetics>
</comment>
<comment type="developmental stage">
    <text evidence="3">Expressed in the midgut at the prepupal stage of the last larval instar.</text>
</comment>
<comment type="induction">
    <text evidence="3">Induced by RH-5992, which is an ecdysone agonist used as insecticide.</text>
</comment>
<comment type="similarity">
    <text evidence="5">Belongs to the GMC oxidoreductase family.</text>
</comment>
<accession>Q95NZ0</accession>
<evidence type="ECO:0000250" key="1">
    <source>
        <dbReference type="UniProtKB" id="E4QP00"/>
    </source>
</evidence>
<evidence type="ECO:0000255" key="2">
    <source>
        <dbReference type="PIRSR" id="PIRSR000137-2"/>
    </source>
</evidence>
<evidence type="ECO:0000269" key="3">
    <source>
    </source>
</evidence>
<evidence type="ECO:0000303" key="4">
    <source>
    </source>
</evidence>
<evidence type="ECO:0000305" key="5"/>
<evidence type="ECO:0000305" key="6">
    <source>
    </source>
</evidence>
<evidence type="ECO:0000312" key="7">
    <source>
        <dbReference type="EMBL" id="AAK56552.1"/>
    </source>
</evidence>
<sequence>MCYAVGGCAGAGPAATYVAAALQFFAASQCLLQESYPRQAHVTNGSRYDFIVVGGGTAGSALAARLAEENRFSVLLLEAGPNPPEESIVPGLRQTLKETPYDWNFTTIDDGVTSQALASHVQRQPRGKMLGGSGSLNDMVYARGHPEDYYEWADIAGDVWNWTNVLDYFKRTEHMTDSNIIRNKELMQYHGIGGAIEVSGAHYPDSPNSKLMQAFQELGFAAVDDMTYPYKIGVGKFSHTIRGGRRDSSLTAMLNKVKSGKLHVLKNTFATKILFEGNKAVGIQADSDGRNLFVYAKHEVIVSAGTFNTPKLLLLSGVGPSDILNQFDIDVVQDLPVGQGLQDHVMVLNFMTAERGTCKLSESDGYFNVIKYLYNGSGTLSYSDSIGAYLPQKDKEAHVPYFAIYPSCVPAGQLTSNLCVQGIGFTSEICEKLQKENEMHELIVAAVVLLKPQSRGHVTLKSLNPDDDPAIYSGTFDHEADMEGFPEAIEKAISLVNTTHFKKLGARVVDLTPESCRGLQEPQRTRCSVRALALAAWHAVGTARLGAVLDAELRVRGLEGLRVADASVMPTMVRGNTNAPVVMIAEMAADFIKNQYRDK</sequence>
<organism evidence="7">
    <name type="scientific">Spodoptera littoralis</name>
    <name type="common">Egyptian cotton leafworm</name>
    <dbReference type="NCBI Taxonomy" id="7109"/>
    <lineage>
        <taxon>Eukaryota</taxon>
        <taxon>Metazoa</taxon>
        <taxon>Ecdysozoa</taxon>
        <taxon>Arthropoda</taxon>
        <taxon>Hexapoda</taxon>
        <taxon>Insecta</taxon>
        <taxon>Pterygota</taxon>
        <taxon>Neoptera</taxon>
        <taxon>Endopterygota</taxon>
        <taxon>Lepidoptera</taxon>
        <taxon>Glossata</taxon>
        <taxon>Ditrysia</taxon>
        <taxon>Noctuoidea</taxon>
        <taxon>Noctuidae</taxon>
        <taxon>Amphipyrinae</taxon>
        <taxon>Spodoptera</taxon>
    </lineage>
</organism>
<reference evidence="7" key="1">
    <citation type="journal article" date="2001" name="J. Biol. Chem.">
        <title>Regulation of ecdysteroid signaling: cloning and characterization of ecdysone oxidase: a novel steroid oxidase from the cotton leafworm, Spodoptera littoralis.</title>
        <authorList>
            <person name="Takeuchi H."/>
            <person name="Chen J.H."/>
            <person name="O'Reilly D.R."/>
            <person name="Turner P.C."/>
            <person name="Rees H.H."/>
        </authorList>
    </citation>
    <scope>NUCLEOTIDE SEQUENCE [GENOMIC DNA / MRNA]</scope>
    <scope>PROTEIN SEQUENCE OF 2-19 AND 98-108</scope>
    <scope>FUNCTION</scope>
    <scope>CATALYTIC ACTIVITY</scope>
    <scope>BIOPHYSICOCHEMICAL PROPERTIES</scope>
    <scope>DEVELOPMENTAL STAGE</scope>
</reference>
<protein>
    <recommendedName>
        <fullName evidence="4">Ecdysone oxidase</fullName>
        <ecNumber evidence="3">1.1.3.16</ecNumber>
    </recommendedName>
</protein>
<proteinExistence type="evidence at protein level"/>
<keyword id="KW-0903">Direct protein sequencing</keyword>
<keyword id="KW-0274">FAD</keyword>
<keyword id="KW-0285">Flavoprotein</keyword>
<keyword id="KW-0560">Oxidoreductase</keyword>